<comment type="function">
    <text evidence="1 2">Membrane-anchoring subunit of succinate dehydrogenase (SDH) that is involved in complex II of the mitochondrial electron transport chain and is responsible for transferring electrons from succinate to ubiquinone (coenzyme Q) (By similarity). SDH also oxidizes malate to the non-canonical enol form of oxaloacetate, enol-oxaloacetate (By similarity). Enol-oxaloacetate, which is a potent inhibitor of the succinate dehydrogenase activity, is further isomerized into keto-oxaloacetate (By similarity).</text>
</comment>
<comment type="pathway">
    <text evidence="1">Carbohydrate metabolism; tricarboxylic acid cycle.</text>
</comment>
<comment type="subunit">
    <text evidence="1">Component of complex II composed of four subunits: the flavoprotein (FP) SDHA, iron-sulfur protein (IP) SDHB, and a cytochrome b560 composed of SDHC and SDHD.</text>
</comment>
<comment type="subcellular location">
    <subcellularLocation>
        <location evidence="1">Mitochondrion inner membrane</location>
        <topology evidence="3">Multi-pass membrane protein</topology>
    </subcellularLocation>
</comment>
<comment type="similarity">
    <text evidence="4">Belongs to the CybS family.</text>
</comment>
<sequence length="159" mass="17032">MAVLWRLSAVCGAQGGRALLLRTPVVRPAHISAFLQDRPIPEWCGVQHIHLSPGHHSGSKAASLHWTSERVVSVLLLGLLPAAYLNPCSAMDYSLAATLTLHGHWGLGQVVTDYVHGDASQKAAKAGLLALSALTFAGLCYFNYHDVGICKAVAMLWKL</sequence>
<proteinExistence type="evidence at transcript level"/>
<dbReference type="EMBL" id="CR858453">
    <property type="protein sequence ID" value="CAH90681.1"/>
    <property type="molecule type" value="mRNA"/>
</dbReference>
<dbReference type="RefSeq" id="NP_001125372.1">
    <property type="nucleotide sequence ID" value="NM_001131900.2"/>
</dbReference>
<dbReference type="SMR" id="Q5RC29"/>
<dbReference type="FunCoup" id="Q5RC29">
    <property type="interactions" value="1609"/>
</dbReference>
<dbReference type="STRING" id="9601.ENSPPYP00000004440"/>
<dbReference type="Ensembl" id="ENSPPYT00000055581.1">
    <property type="protein sequence ID" value="ENSPPYP00000040446.1"/>
    <property type="gene ID" value="ENSPPYG00000003876.3"/>
</dbReference>
<dbReference type="GeneID" id="100172275"/>
<dbReference type="KEGG" id="pon:100172275"/>
<dbReference type="CTD" id="6392"/>
<dbReference type="eggNOG" id="KOG4097">
    <property type="taxonomic scope" value="Eukaryota"/>
</dbReference>
<dbReference type="GeneTree" id="ENSGT00390000010003"/>
<dbReference type="HOGENOM" id="CLU_096618_1_1_1"/>
<dbReference type="InParanoid" id="Q5RC29"/>
<dbReference type="OMA" id="VMHQHWG"/>
<dbReference type="OrthoDB" id="18577at2759"/>
<dbReference type="TreeFam" id="TF313310"/>
<dbReference type="UniPathway" id="UPA00223"/>
<dbReference type="Proteomes" id="UP000001595">
    <property type="component" value="Chromosome 11"/>
</dbReference>
<dbReference type="GO" id="GO:0005743">
    <property type="term" value="C:mitochondrial inner membrane"/>
    <property type="evidence" value="ECO:0000250"/>
    <property type="project" value="UniProtKB"/>
</dbReference>
<dbReference type="GO" id="GO:0045273">
    <property type="term" value="C:respiratory chain complex II (succinate dehydrogenase)"/>
    <property type="evidence" value="ECO:0000250"/>
    <property type="project" value="UniProtKB"/>
</dbReference>
<dbReference type="GO" id="GO:0020037">
    <property type="term" value="F:heme binding"/>
    <property type="evidence" value="ECO:0000250"/>
    <property type="project" value="UniProtKB"/>
</dbReference>
<dbReference type="GO" id="GO:0046872">
    <property type="term" value="F:metal ion binding"/>
    <property type="evidence" value="ECO:0007669"/>
    <property type="project" value="UniProtKB-KW"/>
</dbReference>
<dbReference type="GO" id="GO:0048039">
    <property type="term" value="F:ubiquinone binding"/>
    <property type="evidence" value="ECO:0000250"/>
    <property type="project" value="UniProtKB"/>
</dbReference>
<dbReference type="GO" id="GO:0006121">
    <property type="term" value="P:mitochondrial electron transport, succinate to ubiquinone"/>
    <property type="evidence" value="ECO:0007669"/>
    <property type="project" value="TreeGrafter"/>
</dbReference>
<dbReference type="GO" id="GO:0006099">
    <property type="term" value="P:tricarboxylic acid cycle"/>
    <property type="evidence" value="ECO:0007669"/>
    <property type="project" value="UniProtKB-UniPathway"/>
</dbReference>
<dbReference type="CDD" id="cd03496">
    <property type="entry name" value="SQR_TypeC_CybS"/>
    <property type="match status" value="1"/>
</dbReference>
<dbReference type="FunFam" id="1.20.1300.10:FF:000009">
    <property type="entry name" value="Succinate dehydrogenase [ubiquinone] cytochrome b small subunit, mitochondrial"/>
    <property type="match status" value="1"/>
</dbReference>
<dbReference type="Gene3D" id="1.20.1300.10">
    <property type="entry name" value="Fumarate reductase/succinate dehydrogenase, transmembrane subunit"/>
    <property type="match status" value="1"/>
</dbReference>
<dbReference type="InterPro" id="IPR007992">
    <property type="entry name" value="CybS"/>
</dbReference>
<dbReference type="InterPro" id="IPR034804">
    <property type="entry name" value="SQR/QFR_C/D"/>
</dbReference>
<dbReference type="PANTHER" id="PTHR13337">
    <property type="entry name" value="SUCCINATE DEHYDROGENASE"/>
    <property type="match status" value="1"/>
</dbReference>
<dbReference type="PANTHER" id="PTHR13337:SF2">
    <property type="entry name" value="SUCCINATE DEHYDROGENASE [UBIQUINONE] CYTOCHROME B SMALL SUBUNIT, MITOCHONDRIAL"/>
    <property type="match status" value="1"/>
</dbReference>
<dbReference type="Pfam" id="PF05328">
    <property type="entry name" value="CybS"/>
    <property type="match status" value="1"/>
</dbReference>
<dbReference type="SUPFAM" id="SSF81343">
    <property type="entry name" value="Fumarate reductase respiratory complex transmembrane subunits"/>
    <property type="match status" value="1"/>
</dbReference>
<evidence type="ECO:0000250" key="1">
    <source>
        <dbReference type="UniProtKB" id="O14521"/>
    </source>
</evidence>
<evidence type="ECO:0000250" key="2">
    <source>
        <dbReference type="UniProtKB" id="Q95123"/>
    </source>
</evidence>
<evidence type="ECO:0000255" key="3"/>
<evidence type="ECO:0000305" key="4"/>
<reference key="1">
    <citation type="submission" date="2004-11" db="EMBL/GenBank/DDBJ databases">
        <authorList>
            <consortium name="The German cDNA consortium"/>
        </authorList>
    </citation>
    <scope>NUCLEOTIDE SEQUENCE [LARGE SCALE MRNA]</scope>
    <source>
        <tissue>Kidney</tissue>
    </source>
</reference>
<name>DHSD_PONAB</name>
<feature type="transit peptide" description="Mitochondrion" evidence="3">
    <location>
        <begin position="1"/>
        <end position="56"/>
    </location>
</feature>
<feature type="chain" id="PRO_0000043355" description="Succinate dehydrogenase [ubiquinone] cytochrome b small subunit, mitochondrial">
    <location>
        <begin position="57"/>
        <end position="159"/>
    </location>
</feature>
<feature type="topological domain" description="Mitochondrial matrix" evidence="1">
    <location>
        <begin position="57"/>
        <end position="63"/>
    </location>
</feature>
<feature type="transmembrane region" description="Helical" evidence="1">
    <location>
        <begin position="64"/>
        <end position="85"/>
    </location>
</feature>
<feature type="topological domain" description="Mitochondrial intermembrane" evidence="1">
    <location>
        <begin position="86"/>
        <end position="90"/>
    </location>
</feature>
<feature type="transmembrane region" description="Helical" evidence="1">
    <location>
        <begin position="91"/>
        <end position="111"/>
    </location>
</feature>
<feature type="topological domain" description="Mitochondrial matrix" evidence="1">
    <location>
        <begin position="112"/>
        <end position="120"/>
    </location>
</feature>
<feature type="transmembrane region" description="Helical" evidence="1">
    <location>
        <begin position="121"/>
        <end position="142"/>
    </location>
</feature>
<feature type="topological domain" description="Mitochondrial intermembrane" evidence="1">
    <location>
        <begin position="143"/>
        <end position="159"/>
    </location>
</feature>
<feature type="binding site" description="axial binding residue" evidence="1">
    <location>
        <position position="102"/>
    </location>
    <ligand>
        <name>heme b</name>
        <dbReference type="ChEBI" id="CHEBI:60344"/>
        <note>ligand shared with SDHC</note>
    </ligand>
    <ligandPart>
        <name>Fe</name>
        <dbReference type="ChEBI" id="CHEBI:18248"/>
    </ligandPart>
</feature>
<feature type="binding site" evidence="1">
    <location>
        <position position="114"/>
    </location>
    <ligand>
        <name>a ubiquinone</name>
        <dbReference type="ChEBI" id="CHEBI:16389"/>
        <note>ligand shared with IP/SDHB</note>
    </ligand>
</feature>
<keyword id="KW-0249">Electron transport</keyword>
<keyword id="KW-0349">Heme</keyword>
<keyword id="KW-0408">Iron</keyword>
<keyword id="KW-0472">Membrane</keyword>
<keyword id="KW-0479">Metal-binding</keyword>
<keyword id="KW-0496">Mitochondrion</keyword>
<keyword id="KW-0999">Mitochondrion inner membrane</keyword>
<keyword id="KW-1185">Reference proteome</keyword>
<keyword id="KW-0809">Transit peptide</keyword>
<keyword id="KW-0812">Transmembrane</keyword>
<keyword id="KW-1133">Transmembrane helix</keyword>
<keyword id="KW-0813">Transport</keyword>
<keyword id="KW-0816">Tricarboxylic acid cycle</keyword>
<gene>
    <name type="primary">SDHD</name>
</gene>
<organism>
    <name type="scientific">Pongo abelii</name>
    <name type="common">Sumatran orangutan</name>
    <name type="synonym">Pongo pygmaeus abelii</name>
    <dbReference type="NCBI Taxonomy" id="9601"/>
    <lineage>
        <taxon>Eukaryota</taxon>
        <taxon>Metazoa</taxon>
        <taxon>Chordata</taxon>
        <taxon>Craniata</taxon>
        <taxon>Vertebrata</taxon>
        <taxon>Euteleostomi</taxon>
        <taxon>Mammalia</taxon>
        <taxon>Eutheria</taxon>
        <taxon>Euarchontoglires</taxon>
        <taxon>Primates</taxon>
        <taxon>Haplorrhini</taxon>
        <taxon>Catarrhini</taxon>
        <taxon>Hominidae</taxon>
        <taxon>Pongo</taxon>
    </lineage>
</organism>
<protein>
    <recommendedName>
        <fullName>Succinate dehydrogenase [ubiquinone] cytochrome b small subunit, mitochondrial</fullName>
        <shortName>CybS</shortName>
    </recommendedName>
    <alternativeName>
        <fullName>CII-4</fullName>
    </alternativeName>
    <alternativeName>
        <fullName>Malate dehydrogenase [quinone] cytochrome b small subunit</fullName>
    </alternativeName>
    <alternativeName>
        <fullName>QPs3</fullName>
    </alternativeName>
    <alternativeName>
        <fullName>Succinate dehydrogenase complex subunit D</fullName>
    </alternativeName>
    <alternativeName>
        <fullName>Succinate-ubiquinone oxidoreductase cytochrome b small subunit</fullName>
    </alternativeName>
    <alternativeName>
        <fullName>Succinate-ubiquinone reductase membrane anchor subunit</fullName>
    </alternativeName>
</protein>
<accession>Q5RC29</accession>